<name>RS2_GRABC</name>
<evidence type="ECO:0000255" key="1">
    <source>
        <dbReference type="HAMAP-Rule" id="MF_00291"/>
    </source>
</evidence>
<evidence type="ECO:0000305" key="2"/>
<gene>
    <name evidence="1" type="primary">rpsB</name>
    <name type="ordered locus">GbCGDNIH1_1279</name>
</gene>
<accession>Q0BSM5</accession>
<protein>
    <recommendedName>
        <fullName evidence="1">Small ribosomal subunit protein uS2</fullName>
    </recommendedName>
    <alternativeName>
        <fullName evidence="2">30S ribosomal protein S2</fullName>
    </alternativeName>
</protein>
<proteinExistence type="inferred from homology"/>
<feature type="chain" id="PRO_1000003969" description="Small ribosomal subunit protein uS2">
    <location>
        <begin position="1"/>
        <end position="258"/>
    </location>
</feature>
<reference key="1">
    <citation type="journal article" date="2007" name="J. Bacteriol.">
        <title>Genome sequence analysis of the emerging human pathogenic acetic acid bacterium Granulibacter bethesdensis.</title>
        <authorList>
            <person name="Greenberg D.E."/>
            <person name="Porcella S.F."/>
            <person name="Zelazny A.M."/>
            <person name="Virtaneva K."/>
            <person name="Sturdevant D.E."/>
            <person name="Kupko J.J. III"/>
            <person name="Barbian K.D."/>
            <person name="Babar A."/>
            <person name="Dorward D.W."/>
            <person name="Holland S.M."/>
        </authorList>
    </citation>
    <scope>NUCLEOTIDE SEQUENCE [LARGE SCALE GENOMIC DNA]</scope>
    <source>
        <strain>ATCC BAA-1260 / CGDNIH1</strain>
    </source>
</reference>
<sequence length="258" mass="28258">MAMPEFTLRQLLEAGVHFGHHTRRWNPRMAPFIFGVRNQVHILDLQQTVPLLDRSLRAIRDVVAGGGRVLFVGTKRAAAEYVAESAQRCGQYYVNHRWLGGMLTNWKTITGSIKRLRQIDEMLAGDTTGLTKKEVLDITRDREKLERALGGIKDMGGLPDILFIIDTNKEKLAVEEANKLGIPVVAVLDSNSDPSGVTYPIPGNDDAIRAITMYCDLVASAVLDGISAEMIASGRDLGAAEELAPEILPEPEAEQATA</sequence>
<organism>
    <name type="scientific">Granulibacter bethesdensis (strain ATCC BAA-1260 / CGDNIH1)</name>
    <dbReference type="NCBI Taxonomy" id="391165"/>
    <lineage>
        <taxon>Bacteria</taxon>
        <taxon>Pseudomonadati</taxon>
        <taxon>Pseudomonadota</taxon>
        <taxon>Alphaproteobacteria</taxon>
        <taxon>Acetobacterales</taxon>
        <taxon>Acetobacteraceae</taxon>
        <taxon>Granulibacter</taxon>
    </lineage>
</organism>
<comment type="similarity">
    <text evidence="1">Belongs to the universal ribosomal protein uS2 family.</text>
</comment>
<dbReference type="EMBL" id="CP000394">
    <property type="protein sequence ID" value="ABI62177.1"/>
    <property type="molecule type" value="Genomic_DNA"/>
</dbReference>
<dbReference type="RefSeq" id="WP_011631986.1">
    <property type="nucleotide sequence ID" value="NC_008343.2"/>
</dbReference>
<dbReference type="SMR" id="Q0BSM5"/>
<dbReference type="STRING" id="391165.GbCGDNIH1_1279"/>
<dbReference type="GeneID" id="69745518"/>
<dbReference type="KEGG" id="gbe:GbCGDNIH1_1279"/>
<dbReference type="eggNOG" id="COG0052">
    <property type="taxonomic scope" value="Bacteria"/>
</dbReference>
<dbReference type="HOGENOM" id="CLU_040318_2_1_5"/>
<dbReference type="OrthoDB" id="9808036at2"/>
<dbReference type="Proteomes" id="UP000001963">
    <property type="component" value="Chromosome"/>
</dbReference>
<dbReference type="GO" id="GO:0022627">
    <property type="term" value="C:cytosolic small ribosomal subunit"/>
    <property type="evidence" value="ECO:0007669"/>
    <property type="project" value="TreeGrafter"/>
</dbReference>
<dbReference type="GO" id="GO:0003735">
    <property type="term" value="F:structural constituent of ribosome"/>
    <property type="evidence" value="ECO:0007669"/>
    <property type="project" value="InterPro"/>
</dbReference>
<dbReference type="GO" id="GO:0006412">
    <property type="term" value="P:translation"/>
    <property type="evidence" value="ECO:0007669"/>
    <property type="project" value="UniProtKB-UniRule"/>
</dbReference>
<dbReference type="CDD" id="cd01425">
    <property type="entry name" value="RPS2"/>
    <property type="match status" value="1"/>
</dbReference>
<dbReference type="Gene3D" id="3.40.50.10490">
    <property type="entry name" value="Glucose-6-phosphate isomerase like protein, domain 1"/>
    <property type="match status" value="1"/>
</dbReference>
<dbReference type="Gene3D" id="1.10.287.610">
    <property type="entry name" value="Helix hairpin bin"/>
    <property type="match status" value="1"/>
</dbReference>
<dbReference type="HAMAP" id="MF_00291_B">
    <property type="entry name" value="Ribosomal_uS2_B"/>
    <property type="match status" value="1"/>
</dbReference>
<dbReference type="InterPro" id="IPR001865">
    <property type="entry name" value="Ribosomal_uS2"/>
</dbReference>
<dbReference type="InterPro" id="IPR005706">
    <property type="entry name" value="Ribosomal_uS2_bac/mit/plastid"/>
</dbReference>
<dbReference type="InterPro" id="IPR018130">
    <property type="entry name" value="Ribosomal_uS2_CS"/>
</dbReference>
<dbReference type="InterPro" id="IPR023591">
    <property type="entry name" value="Ribosomal_uS2_flav_dom_sf"/>
</dbReference>
<dbReference type="NCBIfam" id="TIGR01011">
    <property type="entry name" value="rpsB_bact"/>
    <property type="match status" value="1"/>
</dbReference>
<dbReference type="PANTHER" id="PTHR12534">
    <property type="entry name" value="30S RIBOSOMAL PROTEIN S2 PROKARYOTIC AND ORGANELLAR"/>
    <property type="match status" value="1"/>
</dbReference>
<dbReference type="PANTHER" id="PTHR12534:SF0">
    <property type="entry name" value="SMALL RIBOSOMAL SUBUNIT PROTEIN US2M"/>
    <property type="match status" value="1"/>
</dbReference>
<dbReference type="Pfam" id="PF00318">
    <property type="entry name" value="Ribosomal_S2"/>
    <property type="match status" value="1"/>
</dbReference>
<dbReference type="PRINTS" id="PR00395">
    <property type="entry name" value="RIBOSOMALS2"/>
</dbReference>
<dbReference type="SUPFAM" id="SSF52313">
    <property type="entry name" value="Ribosomal protein S2"/>
    <property type="match status" value="1"/>
</dbReference>
<dbReference type="PROSITE" id="PS00962">
    <property type="entry name" value="RIBOSOMAL_S2_1"/>
    <property type="match status" value="1"/>
</dbReference>
<dbReference type="PROSITE" id="PS00963">
    <property type="entry name" value="RIBOSOMAL_S2_2"/>
    <property type="match status" value="1"/>
</dbReference>
<keyword id="KW-1185">Reference proteome</keyword>
<keyword id="KW-0687">Ribonucleoprotein</keyword>
<keyword id="KW-0689">Ribosomal protein</keyword>